<evidence type="ECO:0000250" key="1"/>
<evidence type="ECO:0000255" key="2"/>
<evidence type="ECO:0000305" key="3"/>
<gene>
    <name type="primary">CBH-1</name>
</gene>
<proteinExistence type="inferred from homology"/>
<reference key="1">
    <citation type="journal article" date="1995" name="Proc. Natl. Acad. Sci. U.S.A.">
        <title>Induction of a Cryphonectria parasitica cellobiohydrolase I gene is suppressed by hypovirus infection and regulated by a GTP-binding-protein-linked signaling pathway involved in fungal pathogenesis.</title>
        <authorList>
            <person name="Wang P."/>
            <person name="Nuss D.L."/>
        </authorList>
    </citation>
    <scope>NUCLEOTIDE SEQUENCE [GENOMIC DNA]</scope>
</reference>
<comment type="function">
    <text>The biological conversion of cellulose to glucose generally requires three types of hydrolytic enzymes: (1) Endoglucanases which cut internal beta-1,4-glucosidic bonds; (2) Exocellobiohydrolases that cut the disaccharide cellobiose from the non-reducing end of the cellulose polymer chain; (3) Beta-1,4-glucosidases which hydrolyze the cellobiose and other short cello-oligosaccharides to glucose.</text>
</comment>
<comment type="catalytic activity">
    <reaction>
        <text>Hydrolysis of (1-&gt;4)-beta-D-glucosidic linkages in cellulose and cellotetraose, releasing cellobiose from the non-reducing ends of the chains.</text>
        <dbReference type="EC" id="3.2.1.91"/>
    </reaction>
</comment>
<comment type="similarity">
    <text evidence="3">Belongs to the glycosyl hydrolase 7 (cellulase C) family.</text>
</comment>
<protein>
    <recommendedName>
        <fullName>Exoglucanase 1</fullName>
        <ecNumber>3.2.1.91</ecNumber>
    </recommendedName>
    <alternativeName>
        <fullName>1,4-beta-cellobiohydrolase I</fullName>
    </alternativeName>
    <alternativeName>
        <fullName>Beta-glucancellobiohydrolase I</fullName>
    </alternativeName>
    <alternativeName>
        <fullName>Exocellobiohydrolase I</fullName>
    </alternativeName>
    <alternativeName>
        <fullName>Exoglucanase I</fullName>
    </alternativeName>
</protein>
<accession>Q00548</accession>
<dbReference type="EC" id="3.2.1.91"/>
<dbReference type="EMBL" id="L43048">
    <property type="protein sequence ID" value="AAB00479.1"/>
    <property type="molecule type" value="Genomic_DNA"/>
</dbReference>
<dbReference type="SMR" id="Q00548"/>
<dbReference type="CAZy" id="GH7">
    <property type="family name" value="Glycoside Hydrolase Family 7"/>
</dbReference>
<dbReference type="GlyCosmos" id="Q00548">
    <property type="glycosylation" value="3 sites, No reported glycans"/>
</dbReference>
<dbReference type="OMA" id="MADTTHY"/>
<dbReference type="BioCyc" id="MetaCyc:MONOMER-17643"/>
<dbReference type="GO" id="GO:0016162">
    <property type="term" value="F:cellulose 1,4-beta-cellobiosidase activity"/>
    <property type="evidence" value="ECO:0007669"/>
    <property type="project" value="UniProtKB-EC"/>
</dbReference>
<dbReference type="GO" id="GO:0030245">
    <property type="term" value="P:cellulose catabolic process"/>
    <property type="evidence" value="ECO:0007669"/>
    <property type="project" value="UniProtKB-KW"/>
</dbReference>
<dbReference type="CDD" id="cd07999">
    <property type="entry name" value="GH7_CBH_EG"/>
    <property type="match status" value="1"/>
</dbReference>
<dbReference type="FunFam" id="2.70.100.10:FF:000001">
    <property type="entry name" value="Glucanase"/>
    <property type="match status" value="1"/>
</dbReference>
<dbReference type="Gene3D" id="2.70.100.10">
    <property type="entry name" value="Glycoside hydrolase, family 7, domain"/>
    <property type="match status" value="1"/>
</dbReference>
<dbReference type="InterPro" id="IPR013320">
    <property type="entry name" value="ConA-like_dom_sf"/>
</dbReference>
<dbReference type="InterPro" id="IPR001722">
    <property type="entry name" value="Glyco_hydro_7"/>
</dbReference>
<dbReference type="InterPro" id="IPR037019">
    <property type="entry name" value="Glyco_hydro_7_sf"/>
</dbReference>
<dbReference type="PANTHER" id="PTHR33753">
    <property type="entry name" value="1,4-BETA-D-GLUCAN CELLOBIOHYDROLASE B"/>
    <property type="match status" value="1"/>
</dbReference>
<dbReference type="PANTHER" id="PTHR33753:SF2">
    <property type="entry name" value="GLYCOSIDE HYDROLASE FAMILY 7 PROTEIN"/>
    <property type="match status" value="1"/>
</dbReference>
<dbReference type="Pfam" id="PF00840">
    <property type="entry name" value="Glyco_hydro_7"/>
    <property type="match status" value="1"/>
</dbReference>
<dbReference type="PRINTS" id="PR00734">
    <property type="entry name" value="GLHYDRLASE7"/>
</dbReference>
<dbReference type="SUPFAM" id="SSF49899">
    <property type="entry name" value="Concanavalin A-like lectins/glucanases"/>
    <property type="match status" value="1"/>
</dbReference>
<sequence>MFSKFALTGSLLAGAVNAQGVGTQQTETHPQMTWQSCTSPSSCTTNQGEVVIDSNWRWVHDKDGYVNCYTGNTWNTTLCPDDKTCAANCVLDGADYSSTYGITTSGNALSLQFVTQSSGKNIGSRTYLMESSTKYHLFDLIGNEFAFDVDLSKLPCGLNGALYFVTMDADGGMAKYSTNTAGAEYGTGYCDSQCPRDLKFINGQGNVEGWTPSTNDANAGVGGLGSCCSEMDVWEANSMDMAYTPHPCETAAQHSCNADECGGTYSSSRYAGDCDPDGCDWNPFRMGNKDFYGSGDTVDTSQKFTVVTQFHGSGSSLTEISQYYIQGGTKIQQPNSTWPTLTGYNSITDDFCKAQKVEFNDTDVFSEKGGLAQMGAGMADGMVLVMSLWDDHYANMLWLDSTYPVDADASSPGKQRGTCATTSGVPADVESSDASATVIYSNIKFGPIGATY</sequence>
<keyword id="KW-0119">Carbohydrate metabolism</keyword>
<keyword id="KW-0136">Cellulose degradation</keyword>
<keyword id="KW-0325">Glycoprotein</keyword>
<keyword id="KW-0326">Glycosidase</keyword>
<keyword id="KW-0378">Hydrolase</keyword>
<keyword id="KW-0624">Polysaccharide degradation</keyword>
<keyword id="KW-0732">Signal</keyword>
<organism>
    <name type="scientific">Cryphonectria parasitica</name>
    <name type="common">Chestnut blight fungus</name>
    <name type="synonym">Endothia parasitica</name>
    <dbReference type="NCBI Taxonomy" id="5116"/>
    <lineage>
        <taxon>Eukaryota</taxon>
        <taxon>Fungi</taxon>
        <taxon>Dikarya</taxon>
        <taxon>Ascomycota</taxon>
        <taxon>Pezizomycotina</taxon>
        <taxon>Sordariomycetes</taxon>
        <taxon>Sordariomycetidae</taxon>
        <taxon>Diaporthales</taxon>
        <taxon>Cryphonectriaceae</taxon>
        <taxon>Cryphonectria-Endothia species complex</taxon>
        <taxon>Cryphonectria</taxon>
    </lineage>
</organism>
<feature type="signal peptide" evidence="2">
    <location>
        <begin position="1"/>
        <end position="18"/>
    </location>
</feature>
<feature type="chain" id="PRO_0000007920" description="Exoglucanase 1">
    <location>
        <begin position="19"/>
        <end position="452"/>
    </location>
</feature>
<feature type="active site" description="Nucleophile" evidence="1">
    <location>
        <position position="230"/>
    </location>
</feature>
<feature type="active site" description="Proton donor" evidence="1">
    <location>
        <position position="235"/>
    </location>
</feature>
<feature type="glycosylation site" description="N-linked (GlcNAc...) asparagine" evidence="2">
    <location>
        <position position="75"/>
    </location>
</feature>
<feature type="glycosylation site" description="N-linked (GlcNAc...) asparagine" evidence="2">
    <location>
        <position position="335"/>
    </location>
</feature>
<feature type="glycosylation site" description="N-linked (GlcNAc...) asparagine" evidence="2">
    <location>
        <position position="360"/>
    </location>
</feature>
<name>GUX1_CRYPA</name>